<reference key="1">
    <citation type="journal article" date="2008" name="Environ. Microbiol.">
        <title>The genome of Erwinia tasmaniensis strain Et1/99, a non-pathogenic bacterium in the genus Erwinia.</title>
        <authorList>
            <person name="Kube M."/>
            <person name="Migdoll A.M."/>
            <person name="Mueller I."/>
            <person name="Kuhl H."/>
            <person name="Beck A."/>
            <person name="Reinhardt R."/>
            <person name="Geider K."/>
        </authorList>
    </citation>
    <scope>NUCLEOTIDE SEQUENCE [LARGE SCALE GENOMIC DNA]</scope>
    <source>
        <strain>DSM 17950 / CFBP 7177 / CIP 109463 / NCPPB 4357 / Et1/99</strain>
    </source>
</reference>
<protein>
    <recommendedName>
        <fullName evidence="1">UPF0441 protein ETA_04310</fullName>
    </recommendedName>
</protein>
<dbReference type="EMBL" id="CU468135">
    <property type="protein sequence ID" value="CAO95477.1"/>
    <property type="molecule type" value="Genomic_DNA"/>
</dbReference>
<dbReference type="RefSeq" id="WP_012440188.1">
    <property type="nucleotide sequence ID" value="NC_010694.1"/>
</dbReference>
<dbReference type="SMR" id="B2VGH5"/>
<dbReference type="STRING" id="465817.ETA_04310"/>
<dbReference type="KEGG" id="eta:ETA_04310"/>
<dbReference type="eggNOG" id="COG5463">
    <property type="taxonomic scope" value="Bacteria"/>
</dbReference>
<dbReference type="HOGENOM" id="CLU_095624_0_0_6"/>
<dbReference type="OrthoDB" id="5903948at2"/>
<dbReference type="Proteomes" id="UP000001726">
    <property type="component" value="Chromosome"/>
</dbReference>
<dbReference type="HAMAP" id="MF_01188">
    <property type="entry name" value="UPF0441"/>
    <property type="match status" value="1"/>
</dbReference>
<dbReference type="InterPro" id="IPR009576">
    <property type="entry name" value="Biofilm_formation_YgiB"/>
</dbReference>
<dbReference type="NCBIfam" id="NF008655">
    <property type="entry name" value="PRK11653.1"/>
    <property type="match status" value="1"/>
</dbReference>
<dbReference type="Pfam" id="PF06693">
    <property type="entry name" value="DUF1190"/>
    <property type="match status" value="1"/>
</dbReference>
<name>Y431_ERWT9</name>
<gene>
    <name type="ordered locus">ETA_04310</name>
</gene>
<sequence>MKRTKQINHASFRKSWSARHLTPVALAVSAVFMLAACEQADETVSMYQNADDCSAANPGKSEQCTTAFNSAKEEAAKTAPKYASRADCVAEFGEGQCQQAPAQAGVGNTNAESQSSGSFWMPLMAGYMMGRLMGGGMGGQQQPLFSSKSPTSPANGKFVDASGKNYGAATPGRTMTVPKSALAPKPATTSTVTRGGFGESVAKQNTMQRNSSSTGSANRSMGG</sequence>
<organism>
    <name type="scientific">Erwinia tasmaniensis (strain DSM 17950 / CFBP 7177 / CIP 109463 / NCPPB 4357 / Et1/99)</name>
    <dbReference type="NCBI Taxonomy" id="465817"/>
    <lineage>
        <taxon>Bacteria</taxon>
        <taxon>Pseudomonadati</taxon>
        <taxon>Pseudomonadota</taxon>
        <taxon>Gammaproteobacteria</taxon>
        <taxon>Enterobacterales</taxon>
        <taxon>Erwiniaceae</taxon>
        <taxon>Erwinia</taxon>
    </lineage>
</organism>
<comment type="similarity">
    <text evidence="1">Belongs to the UPF0441 family.</text>
</comment>
<keyword id="KW-1185">Reference proteome</keyword>
<proteinExistence type="inferred from homology"/>
<feature type="chain" id="PRO_1000138345" description="UPF0441 protein ETA_04310">
    <location>
        <begin position="1"/>
        <end position="223"/>
    </location>
</feature>
<feature type="region of interest" description="Disordered" evidence="2">
    <location>
        <begin position="166"/>
        <end position="223"/>
    </location>
</feature>
<feature type="compositionally biased region" description="Polar residues" evidence="2">
    <location>
        <begin position="202"/>
        <end position="223"/>
    </location>
</feature>
<evidence type="ECO:0000255" key="1">
    <source>
        <dbReference type="HAMAP-Rule" id="MF_01188"/>
    </source>
</evidence>
<evidence type="ECO:0000256" key="2">
    <source>
        <dbReference type="SAM" id="MobiDB-lite"/>
    </source>
</evidence>
<accession>B2VGH5</accession>